<comment type="function">
    <text evidence="1">Part of a complex that catalyzes the formation of methyl-coenzyme M and tetrahydromethanopterin from coenzyme M and methyl-tetrahydromethanopterin. This is an energy-conserving, sodium-ion translocating step.</text>
</comment>
<comment type="catalytic activity">
    <reaction>
        <text>5-methyl-5,6,7,8-tetrahydromethanopterin + coenzyme M + 2 Na(+)(in) = 5,6,7,8-tetrahydromethanopterin + methyl-coenzyme M + 2 Na(+)(out)</text>
        <dbReference type="Rhea" id="RHEA:53492"/>
        <dbReference type="ChEBI" id="CHEBI:29101"/>
        <dbReference type="ChEBI" id="CHEBI:58103"/>
        <dbReference type="ChEBI" id="CHEBI:58116"/>
        <dbReference type="ChEBI" id="CHEBI:58286"/>
        <dbReference type="ChEBI" id="CHEBI:58319"/>
        <dbReference type="EC" id="7.2.1.4"/>
    </reaction>
</comment>
<comment type="pathway">
    <text>One-carbon metabolism; methanogenesis from CO(2); methyl-coenzyme M from 5,10-methylene-5,6,7,8-tetrahydromethanopterin: step 2/2.</text>
</comment>
<comment type="subunit">
    <text evidence="1">The complex is composed of 8 subunits; MtrA, MtrB, MtrC, MtrD, MtrE, MtrF, MtrG and MtrH.</text>
</comment>
<comment type="subcellular location">
    <subcellularLocation>
        <location evidence="3">Cell membrane</location>
        <topology evidence="3">Multi-pass membrane protein</topology>
    </subcellularLocation>
</comment>
<comment type="similarity">
    <text evidence="3">Belongs to the MtrE family.</text>
</comment>
<feature type="chain" id="PRO_0000147543" description="Tetrahydromethanopterin S-methyltransferase subunit E">
    <location>
        <begin position="1"/>
        <end position="295"/>
    </location>
</feature>
<feature type="transmembrane region" description="Helical" evidence="2">
    <location>
        <begin position="4"/>
        <end position="24"/>
    </location>
</feature>
<feature type="transmembrane region" description="Helical" evidence="2">
    <location>
        <begin position="60"/>
        <end position="80"/>
    </location>
</feature>
<feature type="transmembrane region" description="Helical" evidence="2">
    <location>
        <begin position="87"/>
        <end position="107"/>
    </location>
</feature>
<feature type="transmembrane region" description="Helical" evidence="2">
    <location>
        <begin position="140"/>
        <end position="160"/>
    </location>
</feature>
<feature type="transmembrane region" description="Helical" evidence="2">
    <location>
        <begin position="161"/>
        <end position="181"/>
    </location>
</feature>
<feature type="transmembrane region" description="Helical" evidence="2">
    <location>
        <begin position="234"/>
        <end position="254"/>
    </location>
</feature>
<feature type="transmembrane region" description="Helical" evidence="2">
    <location>
        <begin position="255"/>
        <end position="275"/>
    </location>
</feature>
<sequence>MDPMITGLGVVALMGAAATIAGAAEDLESDVGSQSNPNSQVQLAPQMGHLHRIINKAVSGEPVAYGTWCGIAGSVAYVLMQSMQLPVIMAIAVGAVIAAMVHTTYAVTSHMGRIVSQSQFNQPLFMDMLVQHLGPIAGHGFIVTFCIVGLSYLMTLPIPGFAHPFPLPLLAVLWGITIGAIGSSTGDVHYGAEREYQQYPFGGGIPVAIHGDITTKAELGARNSMDVVHFCAKYGGPLTGFAFGAIVFLSFWNTIVFGITGGIISGLIIVLLLIILNNRLEVFARNRYGPYKEDE</sequence>
<gene>
    <name type="primary">mtrE</name>
    <name type="ordered locus">MTH_1163</name>
</gene>
<dbReference type="EC" id="7.2.1.4"/>
<dbReference type="EMBL" id="AE000666">
    <property type="protein sequence ID" value="AAB85652.1"/>
    <property type="molecule type" value="Genomic_DNA"/>
</dbReference>
<dbReference type="EMBL" id="U10036">
    <property type="protein sequence ID" value="AAA73446.1"/>
    <property type="molecule type" value="Genomic_DNA"/>
</dbReference>
<dbReference type="PIR" id="A69022">
    <property type="entry name" value="A69022"/>
</dbReference>
<dbReference type="RefSeq" id="WP_010876787.1">
    <property type="nucleotide sequence ID" value="NC_000916.1"/>
</dbReference>
<dbReference type="SMR" id="O27231"/>
<dbReference type="FunCoup" id="O27231">
    <property type="interactions" value="67"/>
</dbReference>
<dbReference type="IntAct" id="O27231">
    <property type="interactions" value="2"/>
</dbReference>
<dbReference type="STRING" id="187420.MTH_1163"/>
<dbReference type="PaxDb" id="187420-MTH_1163"/>
<dbReference type="EnsemblBacteria" id="AAB85652">
    <property type="protein sequence ID" value="AAB85652"/>
    <property type="gene ID" value="MTH_1163"/>
</dbReference>
<dbReference type="GeneID" id="40909601"/>
<dbReference type="GeneID" id="77401692"/>
<dbReference type="KEGG" id="mth:MTH_1163"/>
<dbReference type="PATRIC" id="fig|187420.15.peg.1140"/>
<dbReference type="HOGENOM" id="CLU_958513_0_0_2"/>
<dbReference type="InParanoid" id="O27231"/>
<dbReference type="UniPathway" id="UPA00640">
    <property type="reaction ID" value="UER00698"/>
</dbReference>
<dbReference type="Proteomes" id="UP000005223">
    <property type="component" value="Chromosome"/>
</dbReference>
<dbReference type="GO" id="GO:0005737">
    <property type="term" value="C:cytoplasm"/>
    <property type="evidence" value="ECO:0007669"/>
    <property type="project" value="InterPro"/>
</dbReference>
<dbReference type="GO" id="GO:0005886">
    <property type="term" value="C:plasma membrane"/>
    <property type="evidence" value="ECO:0007669"/>
    <property type="project" value="UniProtKB-SubCell"/>
</dbReference>
<dbReference type="GO" id="GO:0012506">
    <property type="term" value="C:vesicle membrane"/>
    <property type="evidence" value="ECO:0007669"/>
    <property type="project" value="InterPro"/>
</dbReference>
<dbReference type="GO" id="GO:0030269">
    <property type="term" value="F:tetrahydromethanopterin S-methyltransferase activity"/>
    <property type="evidence" value="ECO:0007669"/>
    <property type="project" value="UniProtKB-UniRule"/>
</dbReference>
<dbReference type="GO" id="GO:0019386">
    <property type="term" value="P:methanogenesis, from carbon dioxide"/>
    <property type="evidence" value="ECO:0007669"/>
    <property type="project" value="UniProtKB-UniRule"/>
</dbReference>
<dbReference type="GO" id="GO:0032259">
    <property type="term" value="P:methylation"/>
    <property type="evidence" value="ECO:0007669"/>
    <property type="project" value="UniProtKB-KW"/>
</dbReference>
<dbReference type="GO" id="GO:0006730">
    <property type="term" value="P:one-carbon metabolic process"/>
    <property type="evidence" value="ECO:0007669"/>
    <property type="project" value="UniProtKB-UniRule"/>
</dbReference>
<dbReference type="HAMAP" id="MF_01098">
    <property type="entry name" value="MtrE"/>
    <property type="match status" value="1"/>
</dbReference>
<dbReference type="InterPro" id="IPR005780">
    <property type="entry name" value="MeTrfase_E"/>
</dbReference>
<dbReference type="NCBIfam" id="TIGR01113">
    <property type="entry name" value="mtrE"/>
    <property type="match status" value="1"/>
</dbReference>
<dbReference type="Pfam" id="PF04206">
    <property type="entry name" value="MtrE"/>
    <property type="match status" value="1"/>
</dbReference>
<dbReference type="PIRSF" id="PIRSF016509">
    <property type="entry name" value="MtrE"/>
    <property type="match status" value="1"/>
</dbReference>
<evidence type="ECO:0000250" key="1"/>
<evidence type="ECO:0000255" key="2"/>
<evidence type="ECO:0000305" key="3"/>
<reference key="1">
    <citation type="journal article" date="1997" name="J. Bacteriol.">
        <title>Complete genome sequence of Methanobacterium thermoautotrophicum deltaH: functional analysis and comparative genomics.</title>
        <authorList>
            <person name="Smith D.R."/>
            <person name="Doucette-Stamm L.A."/>
            <person name="Deloughery C."/>
            <person name="Lee H.-M."/>
            <person name="Dubois J."/>
            <person name="Aldredge T."/>
            <person name="Bashirzadeh R."/>
            <person name="Blakely D."/>
            <person name="Cook R."/>
            <person name="Gilbert K."/>
            <person name="Harrison D."/>
            <person name="Hoang L."/>
            <person name="Keagle P."/>
            <person name="Lumm W."/>
            <person name="Pothier B."/>
            <person name="Qiu D."/>
            <person name="Spadafora R."/>
            <person name="Vicare R."/>
            <person name="Wang Y."/>
            <person name="Wierzbowski J."/>
            <person name="Gibson R."/>
            <person name="Jiwani N."/>
            <person name="Caruso A."/>
            <person name="Bush D."/>
            <person name="Safer H."/>
            <person name="Patwell D."/>
            <person name="Prabhakar S."/>
            <person name="McDougall S."/>
            <person name="Shimer G."/>
            <person name="Goyal A."/>
            <person name="Pietrovski S."/>
            <person name="Church G.M."/>
            <person name="Daniels C.J."/>
            <person name="Mao J.-I."/>
            <person name="Rice P."/>
            <person name="Noelling J."/>
            <person name="Reeve J.N."/>
        </authorList>
    </citation>
    <scope>NUCLEOTIDE SEQUENCE [LARGE SCALE GENOMIC DNA]</scope>
    <source>
        <strain>ATCC 29096 / DSM 1053 / JCM 10044 / NBRC 100330 / Delta H</strain>
    </source>
</reference>
<reference key="2">
    <citation type="journal article" date="1994" name="J. Bacteriol.">
        <title>Growth phase-dependent transcription of the genes that encode the two methyl coenzyme M reductase isoenzymes and N5-methyltetrahydromethanopterin:coenzyme M methyltransferase in Methanobacterium thermoautotrophicum delta H.</title>
        <authorList>
            <person name="Pihl T.D."/>
            <person name="Sharma S."/>
            <person name="Reeve J.N."/>
        </authorList>
    </citation>
    <scope>NUCLEOTIDE SEQUENCE [GENOMIC DNA] OF 1-33</scope>
    <source>
        <strain>ATCC 29096 / DSM 1053 / JCM 10044 / NBRC 100330 / Delta H</strain>
    </source>
</reference>
<organism>
    <name type="scientific">Methanothermobacter thermautotrophicus (strain ATCC 29096 / DSM 1053 / JCM 10044 / NBRC 100330 / Delta H)</name>
    <name type="common">Methanobacterium thermoautotrophicum</name>
    <dbReference type="NCBI Taxonomy" id="187420"/>
    <lineage>
        <taxon>Archaea</taxon>
        <taxon>Methanobacteriati</taxon>
        <taxon>Methanobacteriota</taxon>
        <taxon>Methanomada group</taxon>
        <taxon>Methanobacteria</taxon>
        <taxon>Methanobacteriales</taxon>
        <taxon>Methanobacteriaceae</taxon>
        <taxon>Methanothermobacter</taxon>
    </lineage>
</organism>
<name>MTRE_METTH</name>
<accession>O27231</accession>
<accession>Q59582</accession>
<protein>
    <recommendedName>
        <fullName>Tetrahydromethanopterin S-methyltransferase subunit E</fullName>
        <ecNumber>7.2.1.4</ecNumber>
    </recommendedName>
    <alternativeName>
        <fullName>N5-methyltetrahydromethanopterin--coenzyme M methyltransferase subunit E</fullName>
    </alternativeName>
</protein>
<proteinExistence type="inferred from homology"/>
<keyword id="KW-1003">Cell membrane</keyword>
<keyword id="KW-0472">Membrane</keyword>
<keyword id="KW-0484">Methanogenesis</keyword>
<keyword id="KW-0489">Methyltransferase</keyword>
<keyword id="KW-0554">One-carbon metabolism</keyword>
<keyword id="KW-1185">Reference proteome</keyword>
<keyword id="KW-0808">Transferase</keyword>
<keyword id="KW-1278">Translocase</keyword>
<keyword id="KW-0812">Transmembrane</keyword>
<keyword id="KW-1133">Transmembrane helix</keyword>